<dbReference type="EMBL" id="CP000930">
    <property type="protein sequence ID" value="ABZ84927.1"/>
    <property type="molecule type" value="Genomic_DNA"/>
</dbReference>
<dbReference type="RefSeq" id="WP_012283424.1">
    <property type="nucleotide sequence ID" value="NC_010337.2"/>
</dbReference>
<dbReference type="SMR" id="B0TII6"/>
<dbReference type="STRING" id="498761.HM1_2377"/>
<dbReference type="KEGG" id="hmo:HM1_2377"/>
<dbReference type="eggNOG" id="COG0468">
    <property type="taxonomic scope" value="Bacteria"/>
</dbReference>
<dbReference type="HOGENOM" id="CLU_040469_3_2_9"/>
<dbReference type="OrthoDB" id="9776733at2"/>
<dbReference type="Proteomes" id="UP000008550">
    <property type="component" value="Chromosome"/>
</dbReference>
<dbReference type="GO" id="GO:0005829">
    <property type="term" value="C:cytosol"/>
    <property type="evidence" value="ECO:0007669"/>
    <property type="project" value="TreeGrafter"/>
</dbReference>
<dbReference type="GO" id="GO:0005524">
    <property type="term" value="F:ATP binding"/>
    <property type="evidence" value="ECO:0007669"/>
    <property type="project" value="UniProtKB-UniRule"/>
</dbReference>
<dbReference type="GO" id="GO:0016887">
    <property type="term" value="F:ATP hydrolysis activity"/>
    <property type="evidence" value="ECO:0007669"/>
    <property type="project" value="InterPro"/>
</dbReference>
<dbReference type="GO" id="GO:0140664">
    <property type="term" value="F:ATP-dependent DNA damage sensor activity"/>
    <property type="evidence" value="ECO:0007669"/>
    <property type="project" value="InterPro"/>
</dbReference>
<dbReference type="GO" id="GO:0003684">
    <property type="term" value="F:damaged DNA binding"/>
    <property type="evidence" value="ECO:0007669"/>
    <property type="project" value="UniProtKB-UniRule"/>
</dbReference>
<dbReference type="GO" id="GO:0003697">
    <property type="term" value="F:single-stranded DNA binding"/>
    <property type="evidence" value="ECO:0007669"/>
    <property type="project" value="UniProtKB-UniRule"/>
</dbReference>
<dbReference type="GO" id="GO:0006310">
    <property type="term" value="P:DNA recombination"/>
    <property type="evidence" value="ECO:0007669"/>
    <property type="project" value="UniProtKB-UniRule"/>
</dbReference>
<dbReference type="GO" id="GO:0006281">
    <property type="term" value="P:DNA repair"/>
    <property type="evidence" value="ECO:0007669"/>
    <property type="project" value="UniProtKB-UniRule"/>
</dbReference>
<dbReference type="GO" id="GO:0009432">
    <property type="term" value="P:SOS response"/>
    <property type="evidence" value="ECO:0007669"/>
    <property type="project" value="UniProtKB-UniRule"/>
</dbReference>
<dbReference type="CDD" id="cd00983">
    <property type="entry name" value="RecA"/>
    <property type="match status" value="1"/>
</dbReference>
<dbReference type="FunFam" id="3.40.50.300:FF:000087">
    <property type="entry name" value="Recombinase RecA"/>
    <property type="match status" value="1"/>
</dbReference>
<dbReference type="Gene3D" id="3.40.50.300">
    <property type="entry name" value="P-loop containing nucleotide triphosphate hydrolases"/>
    <property type="match status" value="1"/>
</dbReference>
<dbReference type="HAMAP" id="MF_00268">
    <property type="entry name" value="RecA"/>
    <property type="match status" value="1"/>
</dbReference>
<dbReference type="InterPro" id="IPR003593">
    <property type="entry name" value="AAA+_ATPase"/>
</dbReference>
<dbReference type="InterPro" id="IPR013765">
    <property type="entry name" value="DNA_recomb/repair_RecA"/>
</dbReference>
<dbReference type="InterPro" id="IPR020584">
    <property type="entry name" value="DNA_recomb/repair_RecA_CS"/>
</dbReference>
<dbReference type="InterPro" id="IPR027417">
    <property type="entry name" value="P-loop_NTPase"/>
</dbReference>
<dbReference type="InterPro" id="IPR049261">
    <property type="entry name" value="RecA-like_C"/>
</dbReference>
<dbReference type="InterPro" id="IPR049428">
    <property type="entry name" value="RecA-like_N"/>
</dbReference>
<dbReference type="InterPro" id="IPR020588">
    <property type="entry name" value="RecA_ATP-bd"/>
</dbReference>
<dbReference type="InterPro" id="IPR023400">
    <property type="entry name" value="RecA_C_sf"/>
</dbReference>
<dbReference type="InterPro" id="IPR020587">
    <property type="entry name" value="RecA_monomer-monomer_interface"/>
</dbReference>
<dbReference type="NCBIfam" id="TIGR02012">
    <property type="entry name" value="tigrfam_recA"/>
    <property type="match status" value="1"/>
</dbReference>
<dbReference type="PANTHER" id="PTHR45900:SF1">
    <property type="entry name" value="MITOCHONDRIAL DNA REPAIR PROTEIN RECA HOMOLOG-RELATED"/>
    <property type="match status" value="1"/>
</dbReference>
<dbReference type="PANTHER" id="PTHR45900">
    <property type="entry name" value="RECA"/>
    <property type="match status" value="1"/>
</dbReference>
<dbReference type="Pfam" id="PF00154">
    <property type="entry name" value="RecA"/>
    <property type="match status" value="1"/>
</dbReference>
<dbReference type="Pfam" id="PF21096">
    <property type="entry name" value="RecA_C"/>
    <property type="match status" value="1"/>
</dbReference>
<dbReference type="PRINTS" id="PR00142">
    <property type="entry name" value="RECA"/>
</dbReference>
<dbReference type="SMART" id="SM00382">
    <property type="entry name" value="AAA"/>
    <property type="match status" value="1"/>
</dbReference>
<dbReference type="SUPFAM" id="SSF52540">
    <property type="entry name" value="P-loop containing nucleoside triphosphate hydrolases"/>
    <property type="match status" value="1"/>
</dbReference>
<dbReference type="SUPFAM" id="SSF54752">
    <property type="entry name" value="RecA protein, C-terminal domain"/>
    <property type="match status" value="1"/>
</dbReference>
<dbReference type="PROSITE" id="PS00321">
    <property type="entry name" value="RECA_1"/>
    <property type="match status" value="1"/>
</dbReference>
<dbReference type="PROSITE" id="PS50162">
    <property type="entry name" value="RECA_2"/>
    <property type="match status" value="1"/>
</dbReference>
<dbReference type="PROSITE" id="PS50163">
    <property type="entry name" value="RECA_3"/>
    <property type="match status" value="1"/>
</dbReference>
<accession>B0TII6</accession>
<evidence type="ECO:0000255" key="1">
    <source>
        <dbReference type="HAMAP-Rule" id="MF_00268"/>
    </source>
</evidence>
<gene>
    <name evidence="1" type="primary">recA</name>
    <name type="ordered locus">Helmi_23020</name>
    <name type="ORF">HM1_2377</name>
</gene>
<comment type="function">
    <text evidence="1">Can catalyze the hydrolysis of ATP in the presence of single-stranded DNA, the ATP-dependent uptake of single-stranded DNA by duplex DNA, and the ATP-dependent hybridization of homologous single-stranded DNAs. It interacts with LexA causing its activation and leading to its autocatalytic cleavage.</text>
</comment>
<comment type="subcellular location">
    <subcellularLocation>
        <location evidence="1">Cytoplasm</location>
    </subcellularLocation>
</comment>
<comment type="similarity">
    <text evidence="1">Belongs to the RecA family.</text>
</comment>
<reference key="1">
    <citation type="journal article" date="2008" name="J. Bacteriol.">
        <title>The genome of Heliobacterium modesticaldum, a phototrophic representative of the Firmicutes containing the simplest photosynthetic apparatus.</title>
        <authorList>
            <person name="Sattley W.M."/>
            <person name="Madigan M.T."/>
            <person name="Swingley W.D."/>
            <person name="Cheung P.C."/>
            <person name="Clocksin K.M."/>
            <person name="Conrad A.L."/>
            <person name="Dejesa L.C."/>
            <person name="Honchak B.M."/>
            <person name="Jung D.O."/>
            <person name="Karbach L.E."/>
            <person name="Kurdoglu A."/>
            <person name="Lahiri S."/>
            <person name="Mastrian S.D."/>
            <person name="Page L.E."/>
            <person name="Taylor H.L."/>
            <person name="Wang Z.T."/>
            <person name="Raymond J."/>
            <person name="Chen M."/>
            <person name="Blankenship R.E."/>
            <person name="Touchman J.W."/>
        </authorList>
    </citation>
    <scope>NUCLEOTIDE SEQUENCE [LARGE SCALE GENOMIC DNA]</scope>
    <source>
        <strain>ATCC 51547 / Ice1</strain>
    </source>
</reference>
<keyword id="KW-0067">ATP-binding</keyword>
<keyword id="KW-0963">Cytoplasm</keyword>
<keyword id="KW-0227">DNA damage</keyword>
<keyword id="KW-0233">DNA recombination</keyword>
<keyword id="KW-0234">DNA repair</keyword>
<keyword id="KW-0238">DNA-binding</keyword>
<keyword id="KW-0547">Nucleotide-binding</keyword>
<keyword id="KW-1185">Reference proteome</keyword>
<keyword id="KW-0742">SOS response</keyword>
<organism>
    <name type="scientific">Heliobacterium modesticaldum (strain ATCC 51547 / Ice1)</name>
    <dbReference type="NCBI Taxonomy" id="498761"/>
    <lineage>
        <taxon>Bacteria</taxon>
        <taxon>Bacillati</taxon>
        <taxon>Bacillota</taxon>
        <taxon>Clostridia</taxon>
        <taxon>Eubacteriales</taxon>
        <taxon>Heliobacteriaceae</taxon>
        <taxon>Heliomicrobium</taxon>
    </lineage>
</organism>
<feature type="chain" id="PRO_1000114337" description="Protein RecA">
    <location>
        <begin position="1"/>
        <end position="346"/>
    </location>
</feature>
<feature type="binding site" evidence="1">
    <location>
        <begin position="68"/>
        <end position="75"/>
    </location>
    <ligand>
        <name>ATP</name>
        <dbReference type="ChEBI" id="CHEBI:30616"/>
    </ligand>
</feature>
<name>RECA_HELMI</name>
<sequence>MAAGDNKLQALQQALNSIEKAFGKGSIMRLGEASAKLLVEVIPTGSIALDMALGIGGVPRGRIVEVYGPESSGKTTVALHIIAEAQKMGGMAAFIDAEHALDPVYARNLGVDIDNLLVSQPDTGEQALEICEALVRSGAIDVVVIDSVAALVPKAEIDGEMGDAHVGLQARLMSQALRKLTGVVSKSKTCCLFINQIREKVGVMFGNPETTPGGRALKFYSSVRLEVRKVDTLKQGSDMIGSRTRVKVVKNKVAPPFKVADFDIMYGEGISREGSLVDLAVDMGIVEKSGAWYSYKGDRLGQGRENVKEFLRNHPALAAEIESMIRGRTESARLAAAAAPAAGDGE</sequence>
<proteinExistence type="inferred from homology"/>
<protein>
    <recommendedName>
        <fullName evidence="1">Protein RecA</fullName>
    </recommendedName>
    <alternativeName>
        <fullName evidence="1">Recombinase A</fullName>
    </alternativeName>
</protein>